<organism>
    <name type="scientific">Anaeromyxobacter sp. (strain Fw109-5)</name>
    <dbReference type="NCBI Taxonomy" id="404589"/>
    <lineage>
        <taxon>Bacteria</taxon>
        <taxon>Pseudomonadati</taxon>
        <taxon>Myxococcota</taxon>
        <taxon>Myxococcia</taxon>
        <taxon>Myxococcales</taxon>
        <taxon>Cystobacterineae</taxon>
        <taxon>Anaeromyxobacteraceae</taxon>
        <taxon>Anaeromyxobacter</taxon>
    </lineage>
</organism>
<dbReference type="EC" id="2.1.2.1" evidence="1"/>
<dbReference type="EMBL" id="CP000769">
    <property type="protein sequence ID" value="ABS26934.1"/>
    <property type="molecule type" value="Genomic_DNA"/>
</dbReference>
<dbReference type="RefSeq" id="WP_012097535.1">
    <property type="nucleotide sequence ID" value="NC_009675.1"/>
</dbReference>
<dbReference type="SMR" id="A7HDY8"/>
<dbReference type="STRING" id="404589.Anae109_2733"/>
<dbReference type="KEGG" id="afw:Anae109_2733"/>
<dbReference type="eggNOG" id="COG0112">
    <property type="taxonomic scope" value="Bacteria"/>
</dbReference>
<dbReference type="HOGENOM" id="CLU_022477_2_1_7"/>
<dbReference type="OrthoDB" id="9803846at2"/>
<dbReference type="UniPathway" id="UPA00193"/>
<dbReference type="UniPathway" id="UPA00288">
    <property type="reaction ID" value="UER01023"/>
</dbReference>
<dbReference type="Proteomes" id="UP000006382">
    <property type="component" value="Chromosome"/>
</dbReference>
<dbReference type="GO" id="GO:0005829">
    <property type="term" value="C:cytosol"/>
    <property type="evidence" value="ECO:0007669"/>
    <property type="project" value="TreeGrafter"/>
</dbReference>
<dbReference type="GO" id="GO:0004372">
    <property type="term" value="F:glycine hydroxymethyltransferase activity"/>
    <property type="evidence" value="ECO:0007669"/>
    <property type="project" value="UniProtKB-UniRule"/>
</dbReference>
<dbReference type="GO" id="GO:0030170">
    <property type="term" value="F:pyridoxal phosphate binding"/>
    <property type="evidence" value="ECO:0007669"/>
    <property type="project" value="UniProtKB-UniRule"/>
</dbReference>
<dbReference type="GO" id="GO:0019264">
    <property type="term" value="P:glycine biosynthetic process from serine"/>
    <property type="evidence" value="ECO:0007669"/>
    <property type="project" value="UniProtKB-UniRule"/>
</dbReference>
<dbReference type="GO" id="GO:0035999">
    <property type="term" value="P:tetrahydrofolate interconversion"/>
    <property type="evidence" value="ECO:0007669"/>
    <property type="project" value="UniProtKB-UniRule"/>
</dbReference>
<dbReference type="CDD" id="cd00378">
    <property type="entry name" value="SHMT"/>
    <property type="match status" value="1"/>
</dbReference>
<dbReference type="FunFam" id="3.40.640.10:FF:000001">
    <property type="entry name" value="Serine hydroxymethyltransferase"/>
    <property type="match status" value="1"/>
</dbReference>
<dbReference type="FunFam" id="3.90.1150.10:FF:000003">
    <property type="entry name" value="Serine hydroxymethyltransferase"/>
    <property type="match status" value="1"/>
</dbReference>
<dbReference type="Gene3D" id="3.90.1150.10">
    <property type="entry name" value="Aspartate Aminotransferase, domain 1"/>
    <property type="match status" value="1"/>
</dbReference>
<dbReference type="Gene3D" id="3.40.640.10">
    <property type="entry name" value="Type I PLP-dependent aspartate aminotransferase-like (Major domain)"/>
    <property type="match status" value="1"/>
</dbReference>
<dbReference type="HAMAP" id="MF_00051">
    <property type="entry name" value="SHMT"/>
    <property type="match status" value="1"/>
</dbReference>
<dbReference type="InterPro" id="IPR015424">
    <property type="entry name" value="PyrdxlP-dep_Trfase"/>
</dbReference>
<dbReference type="InterPro" id="IPR015421">
    <property type="entry name" value="PyrdxlP-dep_Trfase_major"/>
</dbReference>
<dbReference type="InterPro" id="IPR015422">
    <property type="entry name" value="PyrdxlP-dep_Trfase_small"/>
</dbReference>
<dbReference type="InterPro" id="IPR001085">
    <property type="entry name" value="Ser_HO-MeTrfase"/>
</dbReference>
<dbReference type="InterPro" id="IPR049943">
    <property type="entry name" value="Ser_HO-MeTrfase-like"/>
</dbReference>
<dbReference type="InterPro" id="IPR019798">
    <property type="entry name" value="Ser_HO-MeTrfase_PLP_BS"/>
</dbReference>
<dbReference type="InterPro" id="IPR039429">
    <property type="entry name" value="SHMT-like_dom"/>
</dbReference>
<dbReference type="NCBIfam" id="NF000586">
    <property type="entry name" value="PRK00011.1"/>
    <property type="match status" value="1"/>
</dbReference>
<dbReference type="PANTHER" id="PTHR11680">
    <property type="entry name" value="SERINE HYDROXYMETHYLTRANSFERASE"/>
    <property type="match status" value="1"/>
</dbReference>
<dbReference type="PANTHER" id="PTHR11680:SF50">
    <property type="entry name" value="SERINE HYDROXYMETHYLTRANSFERASE"/>
    <property type="match status" value="1"/>
</dbReference>
<dbReference type="Pfam" id="PF00464">
    <property type="entry name" value="SHMT"/>
    <property type="match status" value="1"/>
</dbReference>
<dbReference type="PIRSF" id="PIRSF000412">
    <property type="entry name" value="SHMT"/>
    <property type="match status" value="1"/>
</dbReference>
<dbReference type="SUPFAM" id="SSF53383">
    <property type="entry name" value="PLP-dependent transferases"/>
    <property type="match status" value="1"/>
</dbReference>
<dbReference type="PROSITE" id="PS00096">
    <property type="entry name" value="SHMT"/>
    <property type="match status" value="1"/>
</dbReference>
<protein>
    <recommendedName>
        <fullName evidence="1">Serine hydroxymethyltransferase</fullName>
        <shortName evidence="1">SHMT</shortName>
        <shortName evidence="1">Serine methylase</shortName>
        <ecNumber evidence="1">2.1.2.1</ecNumber>
    </recommendedName>
</protein>
<feature type="chain" id="PRO_1000006217" description="Serine hydroxymethyltransferase">
    <location>
        <begin position="1"/>
        <end position="417"/>
    </location>
</feature>
<feature type="binding site" evidence="1">
    <location>
        <position position="120"/>
    </location>
    <ligand>
        <name>(6S)-5,6,7,8-tetrahydrofolate</name>
        <dbReference type="ChEBI" id="CHEBI:57453"/>
    </ligand>
</feature>
<feature type="binding site" evidence="1">
    <location>
        <begin position="124"/>
        <end position="126"/>
    </location>
    <ligand>
        <name>(6S)-5,6,7,8-tetrahydrofolate</name>
        <dbReference type="ChEBI" id="CHEBI:57453"/>
    </ligand>
</feature>
<feature type="site" description="Plays an important role in substrate specificity" evidence="1">
    <location>
        <position position="228"/>
    </location>
</feature>
<feature type="modified residue" description="N6-(pyridoxal phosphate)lysine" evidence="1">
    <location>
        <position position="229"/>
    </location>
</feature>
<name>GLYA_ANADF</name>
<accession>A7HDY8</accession>
<reference key="1">
    <citation type="journal article" date="2015" name="Genome Announc.">
        <title>Complete genome sequence of Anaeromyxobacter sp. Fw109-5, an anaerobic, metal-reducing bacterium isolated from a contaminated subsurface environment.</title>
        <authorList>
            <person name="Hwang C."/>
            <person name="Copeland A."/>
            <person name="Lucas S."/>
            <person name="Lapidus A."/>
            <person name="Barry K."/>
            <person name="Glavina Del Rio T."/>
            <person name="Dalin E."/>
            <person name="Tice H."/>
            <person name="Pitluck S."/>
            <person name="Sims D."/>
            <person name="Brettin T."/>
            <person name="Bruce D.C."/>
            <person name="Detter J.C."/>
            <person name="Han C.S."/>
            <person name="Schmutz J."/>
            <person name="Larimer F.W."/>
            <person name="Land M.L."/>
            <person name="Hauser L.J."/>
            <person name="Kyrpides N."/>
            <person name="Lykidis A."/>
            <person name="Richardson P."/>
            <person name="Belieav A."/>
            <person name="Sanford R.A."/>
            <person name="Loeffler F.E."/>
            <person name="Fields M.W."/>
        </authorList>
    </citation>
    <scope>NUCLEOTIDE SEQUENCE [LARGE SCALE GENOMIC DNA]</scope>
    <source>
        <strain>Fw109-5</strain>
    </source>
</reference>
<gene>
    <name evidence="1" type="primary">glyA</name>
    <name type="ordered locus">Anae109_2733</name>
</gene>
<proteinExistence type="inferred from homology"/>
<keyword id="KW-0028">Amino-acid biosynthesis</keyword>
<keyword id="KW-0963">Cytoplasm</keyword>
<keyword id="KW-0554">One-carbon metabolism</keyword>
<keyword id="KW-0663">Pyridoxal phosphate</keyword>
<keyword id="KW-1185">Reference proteome</keyword>
<keyword id="KW-0808">Transferase</keyword>
<evidence type="ECO:0000255" key="1">
    <source>
        <dbReference type="HAMAP-Rule" id="MF_00051"/>
    </source>
</evidence>
<sequence>MMPTKPLAEADPQIAQLIREETRRQAEGLELIASENFVSPAVMEAMGSTLTNKYAEGYPGKRYYGGCEVVDKVEQLAIDRAKQLFGAEHANVQPHSGSQANMAAYFALATPGDTVLAMSLNFGGHLTHGSPVNFSGKLFKIVPYGLKQSDETIDMDEVARLAREHRPKVLMVGASAYPRTLHFDRFAGIAREVGAALVVDMAHIAGLVAAGLHPNPVPHAEIVTTTTHKTLRGPRGGLILTREAHAKVLNSQIFPGIQGGPLEHVIAAKAVAFHEALQPSFKEYQRRIVENAQALAEGLKEAGLRLVSGGTDNHLMLVDLRPKKLTGKIGEEALGKAGITVNKNMIPWDPEKPMTTSGIRVGTPALTTRGMGPGEMATVASLIGRVLDAPADEKVIAAVRGEVRELCAQFPMYQDRL</sequence>
<comment type="function">
    <text evidence="1">Catalyzes the reversible interconversion of serine and glycine with tetrahydrofolate (THF) serving as the one-carbon carrier. This reaction serves as the major source of one-carbon groups required for the biosynthesis of purines, thymidylate, methionine, and other important biomolecules. Also exhibits THF-independent aldolase activity toward beta-hydroxyamino acids, producing glycine and aldehydes, via a retro-aldol mechanism.</text>
</comment>
<comment type="catalytic activity">
    <reaction evidence="1">
        <text>(6R)-5,10-methylene-5,6,7,8-tetrahydrofolate + glycine + H2O = (6S)-5,6,7,8-tetrahydrofolate + L-serine</text>
        <dbReference type="Rhea" id="RHEA:15481"/>
        <dbReference type="ChEBI" id="CHEBI:15377"/>
        <dbReference type="ChEBI" id="CHEBI:15636"/>
        <dbReference type="ChEBI" id="CHEBI:33384"/>
        <dbReference type="ChEBI" id="CHEBI:57305"/>
        <dbReference type="ChEBI" id="CHEBI:57453"/>
        <dbReference type="EC" id="2.1.2.1"/>
    </reaction>
</comment>
<comment type="cofactor">
    <cofactor evidence="1">
        <name>pyridoxal 5'-phosphate</name>
        <dbReference type="ChEBI" id="CHEBI:597326"/>
    </cofactor>
</comment>
<comment type="pathway">
    <text evidence="1">One-carbon metabolism; tetrahydrofolate interconversion.</text>
</comment>
<comment type="pathway">
    <text evidence="1">Amino-acid biosynthesis; glycine biosynthesis; glycine from L-serine: step 1/1.</text>
</comment>
<comment type="subunit">
    <text evidence="1">Homodimer.</text>
</comment>
<comment type="subcellular location">
    <subcellularLocation>
        <location evidence="1">Cytoplasm</location>
    </subcellularLocation>
</comment>
<comment type="similarity">
    <text evidence="1">Belongs to the SHMT family.</text>
</comment>